<protein>
    <recommendedName>
        <fullName evidence="8">Subtilisin-like protease SBT2.6</fullName>
        <ecNumber evidence="7">3.4.21.-</ecNumber>
    </recommendedName>
    <alternativeName>
        <fullName evidence="8">Subtilase subfamily 2 member 6</fullName>
        <shortName evidence="8">AtSBT2.6</shortName>
    </alternativeName>
</protein>
<proteinExistence type="evidence at transcript level"/>
<name>SBT26_ARATH</name>
<sequence>MDIGCKVLVFFTCFLTVTAEIYIVTMEGEPIISYKGGDNGFEATAVESDEKIDTTSELVTSYARHLERKHDMLLGMLFVEGSYKKLYSYKHLINGFAAHVSPDQAEMLRRAPGVKSVDRDWKVRKLTTHTPQFLGLPTDVWPTGGGYDRAGEDIVIGFIDSGIFPHHPSFASHHTTVPYGPHPSYKGKCEEDPHTKISFCNGKIIGAQHFAEAAKAAGAFNPDIDFASPMDGDGHGSHTAAIAAGNNGIPVRMHGYEFGKASGMAPRARIAVYKALYRLFGGFVADVVAAIDQAVHDGVDILSLSVGPNSPPATTKTTFLNPFDATLLGAVKAGVFVAQAAGNGGPFPKTLVSYSPWITTVAAAIDDRRYKNHLTLGNGKMLAGIGLSPSTRPHRSYKMVSANDVLLGSSGMKYNPSDCQKPEVLNKKLVEGNILLCGYSFNFVAGSASIKKVAETAKHLGAAGFVLVVENVSPGTKFDPVPSCIPGILITDVSKSMDLIDYYNVTTSRDWMGRVKDFKAEGSIGDGLEPILHKSAPEVALFSARGPNTKDFSFQDADLLKPDILAPGSLIWSAWSANGTDEANYIGEGFALISGTSMAAPHIAGIAALVKQKHPQWSPAAIKSALMTTSTVIDRAGRPLQAQQYSETETVTLVKATPFDYGSGHVNPSAALDPGLIFDAGYEDYIGFLCTTPGIDAHEIKNFTNTPCNFKMVHPSNFNTPSIAISHLVRTQTVTRRVTNVAEEEETYTITSRMEPAIAIEVSPPAMTVRAGASRTFSVTLTVRSVTGAYSFGQVTLKGSRGHKVTLPVVAMGQRR</sequence>
<keyword id="KW-0068">Autocatalytic cleavage</keyword>
<keyword id="KW-0325">Glycoprotein</keyword>
<keyword id="KW-0378">Hydrolase</keyword>
<keyword id="KW-0645">Protease</keyword>
<keyword id="KW-1185">Reference proteome</keyword>
<keyword id="KW-0964">Secreted</keyword>
<keyword id="KW-0720">Serine protease</keyword>
<keyword id="KW-0732">Signal</keyword>
<keyword id="KW-0865">Zymogen</keyword>
<comment type="subcellular location">
    <subcellularLocation>
        <location evidence="2">Secreted</location>
    </subcellularLocation>
</comment>
<comment type="similarity">
    <text evidence="9">Belongs to the peptidase S8 family.</text>
</comment>
<feature type="signal peptide" evidence="4">
    <location>
        <begin position="1"/>
        <end position="19"/>
    </location>
</feature>
<feature type="propeptide" id="PRO_0000435186" description="Activation peptide" evidence="3">
    <location>
        <begin position="20"/>
        <end position="126"/>
    </location>
</feature>
<feature type="chain" id="PRO_5004337366" description="Subtilisin-like protease SBT2.6">
    <location>
        <begin position="127"/>
        <end status="unknown"/>
    </location>
</feature>
<feature type="propeptide" id="PRO_0000435187" evidence="1">
    <location>
        <begin status="unknown"/>
        <end position="816"/>
    </location>
</feature>
<feature type="domain" description="Inhibitor I9" evidence="4">
    <location>
        <begin position="22"/>
        <end position="124"/>
    </location>
</feature>
<feature type="domain" description="Peptidase S8" evidence="6">
    <location>
        <begin position="120"/>
        <end position="672"/>
    </location>
</feature>
<feature type="domain" description="PA" evidence="4">
    <location>
        <begin position="418"/>
        <end position="492"/>
    </location>
</feature>
<feature type="active site" description="Charge relay system" evidence="6">
    <location>
        <position position="160"/>
    </location>
</feature>
<feature type="active site" description="Charge relay system" evidence="6">
    <location>
        <position position="235"/>
    </location>
</feature>
<feature type="active site" description="Charge relay system" evidence="6">
    <location>
        <position position="597"/>
    </location>
</feature>
<feature type="glycosylation site" description="N-linked (GlcNAc...) asparagine" evidence="5">
    <location>
        <position position="504"/>
    </location>
</feature>
<feature type="glycosylation site" description="N-linked (GlcNAc...) asparagine" evidence="5">
    <location>
        <position position="578"/>
    </location>
</feature>
<feature type="glycosylation site" description="N-linked (GlcNAc...) asparagine" evidence="5">
    <location>
        <position position="702"/>
    </location>
</feature>
<reference key="1">
    <citation type="journal article" date="1999" name="Nature">
        <title>Sequence and analysis of chromosome 4 of the plant Arabidopsis thaliana.</title>
        <authorList>
            <person name="Mayer K.F.X."/>
            <person name="Schueller C."/>
            <person name="Wambutt R."/>
            <person name="Murphy G."/>
            <person name="Volckaert G."/>
            <person name="Pohl T."/>
            <person name="Duesterhoeft A."/>
            <person name="Stiekema W."/>
            <person name="Entian K.-D."/>
            <person name="Terryn N."/>
            <person name="Harris B."/>
            <person name="Ansorge W."/>
            <person name="Brandt P."/>
            <person name="Grivell L.A."/>
            <person name="Rieger M."/>
            <person name="Weichselgartner M."/>
            <person name="de Simone V."/>
            <person name="Obermaier B."/>
            <person name="Mache R."/>
            <person name="Mueller M."/>
            <person name="Kreis M."/>
            <person name="Delseny M."/>
            <person name="Puigdomenech P."/>
            <person name="Watson M."/>
            <person name="Schmidtheini T."/>
            <person name="Reichert B."/>
            <person name="Portetelle D."/>
            <person name="Perez-Alonso M."/>
            <person name="Boutry M."/>
            <person name="Bancroft I."/>
            <person name="Vos P."/>
            <person name="Hoheisel J."/>
            <person name="Zimmermann W."/>
            <person name="Wedler H."/>
            <person name="Ridley P."/>
            <person name="Langham S.-A."/>
            <person name="McCullagh B."/>
            <person name="Bilham L."/>
            <person name="Robben J."/>
            <person name="van der Schueren J."/>
            <person name="Grymonprez B."/>
            <person name="Chuang Y.-J."/>
            <person name="Vandenbussche F."/>
            <person name="Braeken M."/>
            <person name="Weltjens I."/>
            <person name="Voet M."/>
            <person name="Bastiaens I."/>
            <person name="Aert R."/>
            <person name="Defoor E."/>
            <person name="Weitzenegger T."/>
            <person name="Bothe G."/>
            <person name="Ramsperger U."/>
            <person name="Hilbert H."/>
            <person name="Braun M."/>
            <person name="Holzer E."/>
            <person name="Brandt A."/>
            <person name="Peters S."/>
            <person name="van Staveren M."/>
            <person name="Dirkse W."/>
            <person name="Mooijman P."/>
            <person name="Klein Lankhorst R."/>
            <person name="Rose M."/>
            <person name="Hauf J."/>
            <person name="Koetter P."/>
            <person name="Berneiser S."/>
            <person name="Hempel S."/>
            <person name="Feldpausch M."/>
            <person name="Lamberth S."/>
            <person name="Van den Daele H."/>
            <person name="De Keyser A."/>
            <person name="Buysshaert C."/>
            <person name="Gielen J."/>
            <person name="Villarroel R."/>
            <person name="De Clercq R."/>
            <person name="van Montagu M."/>
            <person name="Rogers J."/>
            <person name="Cronin A."/>
            <person name="Quail M.A."/>
            <person name="Bray-Allen S."/>
            <person name="Clark L."/>
            <person name="Doggett J."/>
            <person name="Hall S."/>
            <person name="Kay M."/>
            <person name="Lennard N."/>
            <person name="McLay K."/>
            <person name="Mayes R."/>
            <person name="Pettett A."/>
            <person name="Rajandream M.A."/>
            <person name="Lyne M."/>
            <person name="Benes V."/>
            <person name="Rechmann S."/>
            <person name="Borkova D."/>
            <person name="Bloecker H."/>
            <person name="Scharfe M."/>
            <person name="Grimm M."/>
            <person name="Loehnert T.-H."/>
            <person name="Dose S."/>
            <person name="de Haan M."/>
            <person name="Maarse A.C."/>
            <person name="Schaefer M."/>
            <person name="Mueller-Auer S."/>
            <person name="Gabel C."/>
            <person name="Fuchs M."/>
            <person name="Fartmann B."/>
            <person name="Granderath K."/>
            <person name="Dauner D."/>
            <person name="Herzl A."/>
            <person name="Neumann S."/>
            <person name="Argiriou A."/>
            <person name="Vitale D."/>
            <person name="Liguori R."/>
            <person name="Piravandi E."/>
            <person name="Massenet O."/>
            <person name="Quigley F."/>
            <person name="Clabauld G."/>
            <person name="Muendlein A."/>
            <person name="Felber R."/>
            <person name="Schnabl S."/>
            <person name="Hiller R."/>
            <person name="Schmidt W."/>
            <person name="Lecharny A."/>
            <person name="Aubourg S."/>
            <person name="Chefdor F."/>
            <person name="Cooke R."/>
            <person name="Berger C."/>
            <person name="Monfort A."/>
            <person name="Casacuberta E."/>
            <person name="Gibbons T."/>
            <person name="Weber N."/>
            <person name="Vandenbol M."/>
            <person name="Bargues M."/>
            <person name="Terol J."/>
            <person name="Torres A."/>
            <person name="Perez-Perez A."/>
            <person name="Purnelle B."/>
            <person name="Bent E."/>
            <person name="Johnson S."/>
            <person name="Tacon D."/>
            <person name="Jesse T."/>
            <person name="Heijnen L."/>
            <person name="Schwarz S."/>
            <person name="Scholler P."/>
            <person name="Heber S."/>
            <person name="Francs P."/>
            <person name="Bielke C."/>
            <person name="Frishman D."/>
            <person name="Haase D."/>
            <person name="Lemcke K."/>
            <person name="Mewes H.-W."/>
            <person name="Stocker S."/>
            <person name="Zaccaria P."/>
            <person name="Bevan M."/>
            <person name="Wilson R.K."/>
            <person name="de la Bastide M."/>
            <person name="Habermann K."/>
            <person name="Parnell L."/>
            <person name="Dedhia N."/>
            <person name="Gnoj L."/>
            <person name="Schutz K."/>
            <person name="Huang E."/>
            <person name="Spiegel L."/>
            <person name="Sekhon M."/>
            <person name="Murray J."/>
            <person name="Sheet P."/>
            <person name="Cordes M."/>
            <person name="Abu-Threideh J."/>
            <person name="Stoneking T."/>
            <person name="Kalicki J."/>
            <person name="Graves T."/>
            <person name="Harmon G."/>
            <person name="Edwards J."/>
            <person name="Latreille P."/>
            <person name="Courtney L."/>
            <person name="Cloud J."/>
            <person name="Abbott A."/>
            <person name="Scott K."/>
            <person name="Johnson D."/>
            <person name="Minx P."/>
            <person name="Bentley D."/>
            <person name="Fulton B."/>
            <person name="Miller N."/>
            <person name="Greco T."/>
            <person name="Kemp K."/>
            <person name="Kramer J."/>
            <person name="Fulton L."/>
            <person name="Mardis E."/>
            <person name="Dante M."/>
            <person name="Pepin K."/>
            <person name="Hillier L.W."/>
            <person name="Nelson J."/>
            <person name="Spieth J."/>
            <person name="Ryan E."/>
            <person name="Andrews S."/>
            <person name="Geisel C."/>
            <person name="Layman D."/>
            <person name="Du H."/>
            <person name="Ali J."/>
            <person name="Berghoff A."/>
            <person name="Jones K."/>
            <person name="Drone K."/>
            <person name="Cotton M."/>
            <person name="Joshu C."/>
            <person name="Antonoiu B."/>
            <person name="Zidanic M."/>
            <person name="Strong C."/>
            <person name="Sun H."/>
            <person name="Lamar B."/>
            <person name="Yordan C."/>
            <person name="Ma P."/>
            <person name="Zhong J."/>
            <person name="Preston R."/>
            <person name="Vil D."/>
            <person name="Shekher M."/>
            <person name="Matero A."/>
            <person name="Shah R."/>
            <person name="Swaby I.K."/>
            <person name="O'Shaughnessy A."/>
            <person name="Rodriguez M."/>
            <person name="Hoffman J."/>
            <person name="Till S."/>
            <person name="Granat S."/>
            <person name="Shohdy N."/>
            <person name="Hasegawa A."/>
            <person name="Hameed A."/>
            <person name="Lodhi M."/>
            <person name="Johnson A."/>
            <person name="Chen E."/>
            <person name="Marra M.A."/>
            <person name="Martienssen R."/>
            <person name="McCombie W.R."/>
        </authorList>
    </citation>
    <scope>NUCLEOTIDE SEQUENCE [LARGE SCALE GENOMIC DNA]</scope>
    <source>
        <strain>cv. Columbia</strain>
    </source>
</reference>
<reference key="2">
    <citation type="journal article" date="2017" name="Plant J.">
        <title>Araport11: a complete reannotation of the Arabidopsis thaliana reference genome.</title>
        <authorList>
            <person name="Cheng C.Y."/>
            <person name="Krishnakumar V."/>
            <person name="Chan A.P."/>
            <person name="Thibaud-Nissen F."/>
            <person name="Schobel S."/>
            <person name="Town C.D."/>
        </authorList>
    </citation>
    <scope>GENOME REANNOTATION</scope>
    <source>
        <strain>cv. Columbia</strain>
    </source>
</reference>
<reference key="3">
    <citation type="journal article" date="2003" name="Science">
        <title>Empirical analysis of transcriptional activity in the Arabidopsis genome.</title>
        <authorList>
            <person name="Yamada K."/>
            <person name="Lim J."/>
            <person name="Dale J.M."/>
            <person name="Chen H."/>
            <person name="Shinn P."/>
            <person name="Palm C.J."/>
            <person name="Southwick A.M."/>
            <person name="Wu H.C."/>
            <person name="Kim C.J."/>
            <person name="Nguyen M."/>
            <person name="Pham P.K."/>
            <person name="Cheuk R.F."/>
            <person name="Karlin-Newmann G."/>
            <person name="Liu S.X."/>
            <person name="Lam B."/>
            <person name="Sakano H."/>
            <person name="Wu T."/>
            <person name="Yu G."/>
            <person name="Miranda M."/>
            <person name="Quach H.L."/>
            <person name="Tripp M."/>
            <person name="Chang C.H."/>
            <person name="Lee J.M."/>
            <person name="Toriumi M.J."/>
            <person name="Chan M.M."/>
            <person name="Tang C.C."/>
            <person name="Onodera C.S."/>
            <person name="Deng J.M."/>
            <person name="Akiyama K."/>
            <person name="Ansari Y."/>
            <person name="Arakawa T."/>
            <person name="Banh J."/>
            <person name="Banno F."/>
            <person name="Bowser L."/>
            <person name="Brooks S.Y."/>
            <person name="Carninci P."/>
            <person name="Chao Q."/>
            <person name="Choy N."/>
            <person name="Enju A."/>
            <person name="Goldsmith A.D."/>
            <person name="Gurjal M."/>
            <person name="Hansen N.F."/>
            <person name="Hayashizaki Y."/>
            <person name="Johnson-Hopson C."/>
            <person name="Hsuan V.W."/>
            <person name="Iida K."/>
            <person name="Karnes M."/>
            <person name="Khan S."/>
            <person name="Koesema E."/>
            <person name="Ishida J."/>
            <person name="Jiang P.X."/>
            <person name="Jones T."/>
            <person name="Kawai J."/>
            <person name="Kamiya A."/>
            <person name="Meyers C."/>
            <person name="Nakajima M."/>
            <person name="Narusaka M."/>
            <person name="Seki M."/>
            <person name="Sakurai T."/>
            <person name="Satou M."/>
            <person name="Tamse R."/>
            <person name="Vaysberg M."/>
            <person name="Wallender E.K."/>
            <person name="Wong C."/>
            <person name="Yamamura Y."/>
            <person name="Yuan S."/>
            <person name="Shinozaki K."/>
            <person name="Davis R.W."/>
            <person name="Theologis A."/>
            <person name="Ecker J.R."/>
        </authorList>
    </citation>
    <scope>NUCLEOTIDE SEQUENCE [LARGE SCALE MRNA]</scope>
    <source>
        <strain>cv. Columbia</strain>
    </source>
</reference>
<reference key="4">
    <citation type="submission" date="2006-07" db="EMBL/GenBank/DDBJ databases">
        <title>Large-scale analysis of RIKEN Arabidopsis full-length (RAFL) cDNAs.</title>
        <authorList>
            <person name="Totoki Y."/>
            <person name="Seki M."/>
            <person name="Ishida J."/>
            <person name="Nakajima M."/>
            <person name="Enju A."/>
            <person name="Kamiya A."/>
            <person name="Narusaka M."/>
            <person name="Shin-i T."/>
            <person name="Nakagawa M."/>
            <person name="Sakamoto N."/>
            <person name="Oishi K."/>
            <person name="Kohara Y."/>
            <person name="Kobayashi M."/>
            <person name="Toyoda A."/>
            <person name="Sakaki Y."/>
            <person name="Sakurai T."/>
            <person name="Iida K."/>
            <person name="Akiyama K."/>
            <person name="Satou M."/>
            <person name="Toyoda T."/>
            <person name="Konagaya A."/>
            <person name="Carninci P."/>
            <person name="Kawai J."/>
            <person name="Hayashizaki Y."/>
            <person name="Shinozaki K."/>
        </authorList>
    </citation>
    <scope>NUCLEOTIDE SEQUENCE [LARGE SCALE MRNA]</scope>
    <source>
        <strain>cv. Columbia</strain>
    </source>
</reference>
<reference key="5">
    <citation type="journal article" date="2005" name="PLoS Comput. Biol.">
        <title>Inferring hypotheses on functional relationships of genes: Analysis of the Arabidopsis thaliana subtilase gene family.</title>
        <authorList>
            <person name="Rautengarten C."/>
            <person name="Steinhauser D."/>
            <person name="Bussis D."/>
            <person name="Stintzi A."/>
            <person name="Schaller A."/>
            <person name="Kopka J."/>
            <person name="Altmann T."/>
        </authorList>
    </citation>
    <scope>GENE FAMILY</scope>
    <scope>NOMENCLATURE</scope>
</reference>
<dbReference type="EC" id="3.4.21.-" evidence="7"/>
<dbReference type="EMBL" id="AL078464">
    <property type="protein sequence ID" value="CAB43837.1"/>
    <property type="molecule type" value="Genomic_DNA"/>
</dbReference>
<dbReference type="EMBL" id="AL161576">
    <property type="protein sequence ID" value="CAB80995.1"/>
    <property type="molecule type" value="Genomic_DNA"/>
</dbReference>
<dbReference type="EMBL" id="CP002687">
    <property type="protein sequence ID" value="AEE85709.1"/>
    <property type="molecule type" value="Genomic_DNA"/>
</dbReference>
<dbReference type="EMBL" id="CP002687">
    <property type="protein sequence ID" value="ANM66536.1"/>
    <property type="molecule type" value="Genomic_DNA"/>
</dbReference>
<dbReference type="EMBL" id="CP002687">
    <property type="protein sequence ID" value="ANM66537.1"/>
    <property type="molecule type" value="Genomic_DNA"/>
</dbReference>
<dbReference type="EMBL" id="CP002687">
    <property type="protein sequence ID" value="ANM66538.1"/>
    <property type="molecule type" value="Genomic_DNA"/>
</dbReference>
<dbReference type="EMBL" id="AY139780">
    <property type="protein sequence ID" value="AAM98098.1"/>
    <property type="molecule type" value="mRNA"/>
</dbReference>
<dbReference type="EMBL" id="BT005822">
    <property type="protein sequence ID" value="AAO64757.1"/>
    <property type="molecule type" value="mRNA"/>
</dbReference>
<dbReference type="EMBL" id="AK226227">
    <property type="protein sequence ID" value="BAE98391.1"/>
    <property type="molecule type" value="mRNA"/>
</dbReference>
<dbReference type="PIR" id="T08978">
    <property type="entry name" value="T08978"/>
</dbReference>
<dbReference type="RefSeq" id="NP_001328423.1">
    <property type="nucleotide sequence ID" value="NM_001341988.1"/>
</dbReference>
<dbReference type="RefSeq" id="NP_001328424.1">
    <property type="nucleotide sequence ID" value="NM_001341989.1"/>
</dbReference>
<dbReference type="RefSeq" id="NP_001328425.1">
    <property type="nucleotide sequence ID" value="NM_001341990.1"/>
</dbReference>
<dbReference type="RefSeq" id="NP_567839.1">
    <property type="nucleotide sequence ID" value="NM_119148.4"/>
</dbReference>
<dbReference type="SMR" id="Q9SZV5"/>
<dbReference type="FunCoup" id="Q9SZV5">
    <property type="interactions" value="64"/>
</dbReference>
<dbReference type="STRING" id="3702.Q9SZV5"/>
<dbReference type="MEROPS" id="S08.A02"/>
<dbReference type="GlyCosmos" id="Q9SZV5">
    <property type="glycosylation" value="3 sites, No reported glycans"/>
</dbReference>
<dbReference type="GlyGen" id="Q9SZV5">
    <property type="glycosylation" value="4 sites"/>
</dbReference>
<dbReference type="PaxDb" id="3702-AT4G30020.1"/>
<dbReference type="ProteomicsDB" id="232904"/>
<dbReference type="EnsemblPlants" id="AT4G30020.1">
    <property type="protein sequence ID" value="AT4G30020.1"/>
    <property type="gene ID" value="AT4G30020"/>
</dbReference>
<dbReference type="EnsemblPlants" id="AT4G30020.2">
    <property type="protein sequence ID" value="AT4G30020.2"/>
    <property type="gene ID" value="AT4G30020"/>
</dbReference>
<dbReference type="EnsemblPlants" id="AT4G30020.3">
    <property type="protein sequence ID" value="AT4G30020.3"/>
    <property type="gene ID" value="AT4G30020"/>
</dbReference>
<dbReference type="EnsemblPlants" id="AT4G30020.4">
    <property type="protein sequence ID" value="AT4G30020.4"/>
    <property type="gene ID" value="AT4G30020"/>
</dbReference>
<dbReference type="GeneID" id="829125"/>
<dbReference type="Gramene" id="AT4G30020.1">
    <property type="protein sequence ID" value="AT4G30020.1"/>
    <property type="gene ID" value="AT4G30020"/>
</dbReference>
<dbReference type="Gramene" id="AT4G30020.2">
    <property type="protein sequence ID" value="AT4G30020.2"/>
    <property type="gene ID" value="AT4G30020"/>
</dbReference>
<dbReference type="Gramene" id="AT4G30020.3">
    <property type="protein sequence ID" value="AT4G30020.3"/>
    <property type="gene ID" value="AT4G30020"/>
</dbReference>
<dbReference type="Gramene" id="AT4G30020.4">
    <property type="protein sequence ID" value="AT4G30020.4"/>
    <property type="gene ID" value="AT4G30020"/>
</dbReference>
<dbReference type="KEGG" id="ath:AT4G30020"/>
<dbReference type="Araport" id="AT4G30020"/>
<dbReference type="TAIR" id="AT4G30020"/>
<dbReference type="eggNOG" id="ENOG502QS8I">
    <property type="taxonomic scope" value="Eukaryota"/>
</dbReference>
<dbReference type="HOGENOM" id="CLU_000625_3_1_1"/>
<dbReference type="InParanoid" id="Q9SZV5"/>
<dbReference type="OMA" id="PCNTSMG"/>
<dbReference type="PhylomeDB" id="Q9SZV5"/>
<dbReference type="PRO" id="PR:Q9SZV5"/>
<dbReference type="Proteomes" id="UP000006548">
    <property type="component" value="Chromosome 4"/>
</dbReference>
<dbReference type="ExpressionAtlas" id="Q9SZV5">
    <property type="expression patterns" value="baseline and differential"/>
</dbReference>
<dbReference type="GO" id="GO:0005576">
    <property type="term" value="C:extracellular region"/>
    <property type="evidence" value="ECO:0007669"/>
    <property type="project" value="UniProtKB-SubCell"/>
</dbReference>
<dbReference type="GO" id="GO:0016020">
    <property type="term" value="C:membrane"/>
    <property type="evidence" value="ECO:0007669"/>
    <property type="project" value="InterPro"/>
</dbReference>
<dbReference type="GO" id="GO:0004252">
    <property type="term" value="F:serine-type endopeptidase activity"/>
    <property type="evidence" value="ECO:0007669"/>
    <property type="project" value="InterPro"/>
</dbReference>
<dbReference type="GO" id="GO:0006508">
    <property type="term" value="P:proteolysis"/>
    <property type="evidence" value="ECO:0007669"/>
    <property type="project" value="UniProtKB-KW"/>
</dbReference>
<dbReference type="CDD" id="cd02120">
    <property type="entry name" value="PA_subtilisin_like"/>
    <property type="match status" value="1"/>
</dbReference>
<dbReference type="CDD" id="cd04852">
    <property type="entry name" value="Peptidases_S8_3"/>
    <property type="match status" value="1"/>
</dbReference>
<dbReference type="FunFam" id="3.40.50.200:FF:000006">
    <property type="entry name" value="Subtilisin-like protease SBT1.5"/>
    <property type="match status" value="1"/>
</dbReference>
<dbReference type="Gene3D" id="2.60.40.2310">
    <property type="match status" value="1"/>
</dbReference>
<dbReference type="Gene3D" id="3.50.30.30">
    <property type="match status" value="1"/>
</dbReference>
<dbReference type="Gene3D" id="3.30.70.80">
    <property type="entry name" value="Peptidase S8 propeptide/proteinase inhibitor I9"/>
    <property type="match status" value="1"/>
</dbReference>
<dbReference type="Gene3D" id="3.40.50.200">
    <property type="entry name" value="Peptidase S8/S53 domain"/>
    <property type="match status" value="1"/>
</dbReference>
<dbReference type="InterPro" id="IPR010435">
    <property type="entry name" value="C5a/SBT2-like_Fn3"/>
</dbReference>
<dbReference type="InterPro" id="IPR000209">
    <property type="entry name" value="Peptidase_S8/S53_dom"/>
</dbReference>
<dbReference type="InterPro" id="IPR036852">
    <property type="entry name" value="Peptidase_S8/S53_dom_sf"/>
</dbReference>
<dbReference type="InterPro" id="IPR023827">
    <property type="entry name" value="Peptidase_S8_Asp-AS"/>
</dbReference>
<dbReference type="InterPro" id="IPR023828">
    <property type="entry name" value="Peptidase_S8_Ser-AS"/>
</dbReference>
<dbReference type="InterPro" id="IPR015500">
    <property type="entry name" value="Peptidase_S8_subtilisin-rel"/>
</dbReference>
<dbReference type="InterPro" id="IPR034197">
    <property type="entry name" value="Peptidases_S8_3"/>
</dbReference>
<dbReference type="InterPro" id="IPR010259">
    <property type="entry name" value="S8pro/Inhibitor_I9"/>
</dbReference>
<dbReference type="InterPro" id="IPR037045">
    <property type="entry name" value="S8pro/Inhibitor_I9_sf"/>
</dbReference>
<dbReference type="InterPro" id="IPR045051">
    <property type="entry name" value="SBT"/>
</dbReference>
<dbReference type="PANTHER" id="PTHR10795">
    <property type="entry name" value="PROPROTEIN CONVERTASE SUBTILISIN/KEXIN"/>
    <property type="match status" value="1"/>
</dbReference>
<dbReference type="Pfam" id="PF06280">
    <property type="entry name" value="fn3_5"/>
    <property type="match status" value="1"/>
</dbReference>
<dbReference type="Pfam" id="PF05922">
    <property type="entry name" value="Inhibitor_I9"/>
    <property type="match status" value="1"/>
</dbReference>
<dbReference type="Pfam" id="PF00082">
    <property type="entry name" value="Peptidase_S8"/>
    <property type="match status" value="1"/>
</dbReference>
<dbReference type="PRINTS" id="PR00723">
    <property type="entry name" value="SUBTILISIN"/>
</dbReference>
<dbReference type="SUPFAM" id="SSF54897">
    <property type="entry name" value="Protease propeptides/inhibitors"/>
    <property type="match status" value="1"/>
</dbReference>
<dbReference type="SUPFAM" id="SSF52743">
    <property type="entry name" value="Subtilisin-like"/>
    <property type="match status" value="1"/>
</dbReference>
<dbReference type="PROSITE" id="PS51892">
    <property type="entry name" value="SUBTILASE"/>
    <property type="match status" value="1"/>
</dbReference>
<dbReference type="PROSITE" id="PS00136">
    <property type="entry name" value="SUBTILASE_ASP"/>
    <property type="match status" value="1"/>
</dbReference>
<dbReference type="PROSITE" id="PS00138">
    <property type="entry name" value="SUBTILASE_SER"/>
    <property type="match status" value="1"/>
</dbReference>
<evidence type="ECO:0000250" key="1">
    <source>
        <dbReference type="UniProtKB" id="Q39547"/>
    </source>
</evidence>
<evidence type="ECO:0000250" key="2">
    <source>
        <dbReference type="UniProtKB" id="Q84WS0"/>
    </source>
</evidence>
<evidence type="ECO:0000250" key="3">
    <source>
        <dbReference type="UniProtKB" id="Q9MAP7"/>
    </source>
</evidence>
<evidence type="ECO:0000255" key="4"/>
<evidence type="ECO:0000255" key="5">
    <source>
        <dbReference type="PROSITE-ProRule" id="PRU00498"/>
    </source>
</evidence>
<evidence type="ECO:0000255" key="6">
    <source>
        <dbReference type="PROSITE-ProRule" id="PRU01240"/>
    </source>
</evidence>
<evidence type="ECO:0000255" key="7">
    <source>
        <dbReference type="PROSITE-ProRule" id="PRU10082"/>
    </source>
</evidence>
<evidence type="ECO:0000303" key="8">
    <source>
    </source>
</evidence>
<evidence type="ECO:0000305" key="9"/>
<evidence type="ECO:0000312" key="10">
    <source>
        <dbReference type="Araport" id="AT4G30020"/>
    </source>
</evidence>
<evidence type="ECO:0000312" key="11">
    <source>
        <dbReference type="EMBL" id="CAB43837.1"/>
    </source>
</evidence>
<gene>
    <name evidence="8" type="primary">SBT2.6</name>
    <name evidence="10" type="ordered locus">At4g30020</name>
    <name evidence="11" type="ORF">F6G3.50</name>
</gene>
<accession>Q9SZV5</accession>
<organism>
    <name type="scientific">Arabidopsis thaliana</name>
    <name type="common">Mouse-ear cress</name>
    <dbReference type="NCBI Taxonomy" id="3702"/>
    <lineage>
        <taxon>Eukaryota</taxon>
        <taxon>Viridiplantae</taxon>
        <taxon>Streptophyta</taxon>
        <taxon>Embryophyta</taxon>
        <taxon>Tracheophyta</taxon>
        <taxon>Spermatophyta</taxon>
        <taxon>Magnoliopsida</taxon>
        <taxon>eudicotyledons</taxon>
        <taxon>Gunneridae</taxon>
        <taxon>Pentapetalae</taxon>
        <taxon>rosids</taxon>
        <taxon>malvids</taxon>
        <taxon>Brassicales</taxon>
        <taxon>Brassicaceae</taxon>
        <taxon>Camelineae</taxon>
        <taxon>Arabidopsis</taxon>
    </lineage>
</organism>